<organism>
    <name type="scientific">Saccharomyces cerevisiae (strain ATCC 204508 / S288c)</name>
    <name type="common">Baker's yeast</name>
    <dbReference type="NCBI Taxonomy" id="559292"/>
    <lineage>
        <taxon>Eukaryota</taxon>
        <taxon>Fungi</taxon>
        <taxon>Dikarya</taxon>
        <taxon>Ascomycota</taxon>
        <taxon>Saccharomycotina</taxon>
        <taxon>Saccharomycetes</taxon>
        <taxon>Saccharomycetales</taxon>
        <taxon>Saccharomycetaceae</taxon>
        <taxon>Saccharomyces</taxon>
    </lineage>
</organism>
<sequence length="250" mass="28777">MDPIGINKVLDHLAPSELIKPVKSCHNKPSVLVLDDRIVDAATKDLYVNGFQEEIQYQNPTPENLQHMFHQGIEILDSARMINVTHLALWKPSSFKLGNPVDFALDDNYDTFWQSDGGQPHQLDIMFSKRMDICVMAIFFSMIADESYAPSLVKVYAGHSPSDARFYKMLEVRNVNGWVALRFLDNREDDQLLKCQFIRLLFPVNHENGKDTHLRGIRLYVPSNEPHQDTHEWAQTLPETNNVFQDAILR</sequence>
<dbReference type="EMBL" id="Z49149">
    <property type="protein sequence ID" value="CAA89016.1"/>
    <property type="status" value="ALT_INIT"/>
    <property type="molecule type" value="Genomic_DNA"/>
</dbReference>
<dbReference type="EMBL" id="Z72762">
    <property type="protein sequence ID" value="CAA96959.1"/>
    <property type="status" value="ALT_INIT"/>
    <property type="molecule type" value="Genomic_DNA"/>
</dbReference>
<dbReference type="EMBL" id="Z72761">
    <property type="protein sequence ID" value="CAA96958.1"/>
    <property type="molecule type" value="Genomic_DNA"/>
</dbReference>
<dbReference type="EMBL" id="BK006941">
    <property type="protein sequence ID" value="DAA07879.1"/>
    <property type="molecule type" value="Genomic_DNA"/>
</dbReference>
<dbReference type="PIR" id="S53941">
    <property type="entry name" value="S53941"/>
</dbReference>
<dbReference type="RefSeq" id="NP_011274.2">
    <property type="nucleotide sequence ID" value="NM_001181106.1"/>
</dbReference>
<dbReference type="PDB" id="1GQP">
    <property type="method" value="X-ray"/>
    <property type="resolution" value="2.20 A"/>
    <property type="chains" value="A/B=30-250"/>
</dbReference>
<dbReference type="PDB" id="8A3T">
    <property type="method" value="EM"/>
    <property type="resolution" value="3.50 A"/>
    <property type="chains" value="A=1-250"/>
</dbReference>
<dbReference type="PDB" id="8A5Y">
    <property type="method" value="EM"/>
    <property type="resolution" value="4.90 A"/>
    <property type="chains" value="A=1-250"/>
</dbReference>
<dbReference type="PDB" id="8A61">
    <property type="method" value="EM"/>
    <property type="resolution" value="5.40 A"/>
    <property type="chains" value="A=1-250"/>
</dbReference>
<dbReference type="PDBsum" id="1GQP"/>
<dbReference type="PDBsum" id="8A3T"/>
<dbReference type="PDBsum" id="8A5Y"/>
<dbReference type="PDBsum" id="8A61"/>
<dbReference type="EMDB" id="EMD-15123"/>
<dbReference type="EMDB" id="EMD-15199"/>
<dbReference type="EMDB" id="EMD-15201"/>
<dbReference type="SMR" id="P53068"/>
<dbReference type="BioGRID" id="33000">
    <property type="interactions" value="241"/>
</dbReference>
<dbReference type="ComplexPortal" id="CPX-756">
    <property type="entry name" value="Anaphase-Promoting core complex"/>
</dbReference>
<dbReference type="ComplexPortal" id="CPX-760">
    <property type="entry name" value="Anaphase-Promoting Complex, CDC20 variant"/>
</dbReference>
<dbReference type="ComplexPortal" id="CPX-761">
    <property type="entry name" value="Anaphase-Promoting Complex, CDH1 variant"/>
</dbReference>
<dbReference type="ComplexPortal" id="CPX-762">
    <property type="entry name" value="Anaphase-Promoting complex AMA1 variant"/>
</dbReference>
<dbReference type="DIP" id="DIP-1128N"/>
<dbReference type="FunCoup" id="P53068">
    <property type="interactions" value="878"/>
</dbReference>
<dbReference type="IntAct" id="P53068">
    <property type="interactions" value="18"/>
</dbReference>
<dbReference type="MINT" id="P53068"/>
<dbReference type="STRING" id="4932.YGL240W"/>
<dbReference type="iPTMnet" id="P53068"/>
<dbReference type="PaxDb" id="4932-YGL240W"/>
<dbReference type="PeptideAtlas" id="P53068"/>
<dbReference type="EnsemblFungi" id="YGL240W_mRNA">
    <property type="protein sequence ID" value="YGL240W"/>
    <property type="gene ID" value="YGL240W"/>
</dbReference>
<dbReference type="GeneID" id="852611"/>
<dbReference type="KEGG" id="sce:YGL240W"/>
<dbReference type="AGR" id="SGD:S000003209"/>
<dbReference type="SGD" id="S000003209">
    <property type="gene designation" value="DOC1"/>
</dbReference>
<dbReference type="VEuPathDB" id="FungiDB:YGL240W"/>
<dbReference type="eggNOG" id="KOG3437">
    <property type="taxonomic scope" value="Eukaryota"/>
</dbReference>
<dbReference type="GeneTree" id="ENSGT00390000013722"/>
<dbReference type="HOGENOM" id="CLU_039415_2_0_1"/>
<dbReference type="InParanoid" id="P53068"/>
<dbReference type="OMA" id="WVALTFE"/>
<dbReference type="OrthoDB" id="24948at2759"/>
<dbReference type="BioCyc" id="YEAST:G3O-30712-MONOMER"/>
<dbReference type="Reactome" id="R-SCE-983168">
    <property type="pathway name" value="Antigen processing: Ubiquitination &amp; Proteasome degradation"/>
</dbReference>
<dbReference type="UniPathway" id="UPA00143"/>
<dbReference type="BioGRID-ORCS" id="852611">
    <property type="hits" value="9 hits in 10 CRISPR screens"/>
</dbReference>
<dbReference type="EvolutionaryTrace" id="P53068"/>
<dbReference type="PRO" id="PR:P53068"/>
<dbReference type="Proteomes" id="UP000002311">
    <property type="component" value="Chromosome VII"/>
</dbReference>
<dbReference type="RNAct" id="P53068">
    <property type="molecule type" value="protein"/>
</dbReference>
<dbReference type="GO" id="GO:0005680">
    <property type="term" value="C:anaphase-promoting complex"/>
    <property type="evidence" value="ECO:0000314"/>
    <property type="project" value="SGD"/>
</dbReference>
<dbReference type="GO" id="GO:0005739">
    <property type="term" value="C:mitochondrion"/>
    <property type="evidence" value="ECO:0007005"/>
    <property type="project" value="SGD"/>
</dbReference>
<dbReference type="GO" id="GO:0030234">
    <property type="term" value="F:enzyme regulator activity"/>
    <property type="evidence" value="ECO:0000314"/>
    <property type="project" value="SGD"/>
</dbReference>
<dbReference type="GO" id="GO:0031145">
    <property type="term" value="P:anaphase-promoting complex-dependent catabolic process"/>
    <property type="evidence" value="ECO:0000314"/>
    <property type="project" value="SGD"/>
</dbReference>
<dbReference type="GO" id="GO:0051301">
    <property type="term" value="P:cell division"/>
    <property type="evidence" value="ECO:0007669"/>
    <property type="project" value="UniProtKB-KW"/>
</dbReference>
<dbReference type="GO" id="GO:0006325">
    <property type="term" value="P:chromatin organization"/>
    <property type="evidence" value="ECO:0000316"/>
    <property type="project" value="SGD"/>
</dbReference>
<dbReference type="GO" id="GO:0070979">
    <property type="term" value="P:protein K11-linked ubiquitination"/>
    <property type="evidence" value="ECO:0000318"/>
    <property type="project" value="GO_Central"/>
</dbReference>
<dbReference type="GO" id="GO:0016567">
    <property type="term" value="P:protein ubiquitination"/>
    <property type="evidence" value="ECO:0000314"/>
    <property type="project" value="ComplexPortal"/>
</dbReference>
<dbReference type="GO" id="GO:0051445">
    <property type="term" value="P:regulation of meiotic cell cycle"/>
    <property type="evidence" value="ECO:0000303"/>
    <property type="project" value="ComplexPortal"/>
</dbReference>
<dbReference type="GO" id="GO:0007346">
    <property type="term" value="P:regulation of mitotic cell cycle"/>
    <property type="evidence" value="ECO:0000303"/>
    <property type="project" value="ComplexPortal"/>
</dbReference>
<dbReference type="CDD" id="cd08366">
    <property type="entry name" value="APC10"/>
    <property type="match status" value="1"/>
</dbReference>
<dbReference type="FunFam" id="2.60.120.260:FF:000139">
    <property type="entry name" value="Anaphase-promoting complex subunit 10"/>
    <property type="match status" value="1"/>
</dbReference>
<dbReference type="Gene3D" id="2.60.120.260">
    <property type="entry name" value="Galactose-binding domain-like"/>
    <property type="match status" value="1"/>
</dbReference>
<dbReference type="InterPro" id="IPR016901">
    <property type="entry name" value="APC10/Doc1"/>
</dbReference>
<dbReference type="InterPro" id="IPR004939">
    <property type="entry name" value="APC_su10/DOC_dom"/>
</dbReference>
<dbReference type="InterPro" id="IPR008979">
    <property type="entry name" value="Galactose-bd-like_sf"/>
</dbReference>
<dbReference type="PANTHER" id="PTHR12936">
    <property type="entry name" value="ANAPHASE-PROMOTING COMPLEX 10"/>
    <property type="match status" value="1"/>
</dbReference>
<dbReference type="PANTHER" id="PTHR12936:SF0">
    <property type="entry name" value="ANAPHASE-PROMOTING COMPLEX SUBUNIT 10"/>
    <property type="match status" value="1"/>
</dbReference>
<dbReference type="Pfam" id="PF03256">
    <property type="entry name" value="ANAPC10"/>
    <property type="match status" value="1"/>
</dbReference>
<dbReference type="SMART" id="SM01337">
    <property type="entry name" value="APC10"/>
    <property type="match status" value="1"/>
</dbReference>
<dbReference type="SUPFAM" id="SSF49785">
    <property type="entry name" value="Galactose-binding domain-like"/>
    <property type="match status" value="1"/>
</dbReference>
<dbReference type="PROSITE" id="PS51284">
    <property type="entry name" value="DOC"/>
    <property type="match status" value="1"/>
</dbReference>
<gene>
    <name type="primary">DOC1</name>
    <name type="synonym">APC10</name>
    <name type="ordered locus">YGL240W</name>
    <name type="ORF">HRC283</name>
</gene>
<reference key="1">
    <citation type="journal article" date="1995" name="Yeast">
        <title>The sequence of an 11.1 kb DNA fragment between ADH4 and ADE5 on the left arm of chromosome VII, reveals the presence of eight open reading frames.</title>
        <authorList>
            <person name="Vandenbol M."/>
            <person name="Durand P."/>
            <person name="Portetelle D."/>
            <person name="Hilger F."/>
        </authorList>
    </citation>
    <scope>NUCLEOTIDE SEQUENCE [GENOMIC DNA]</scope>
    <source>
        <strain>ATCC 204508 / S288c</strain>
    </source>
</reference>
<reference key="2">
    <citation type="journal article" date="1997" name="Nature">
        <title>The nucleotide sequence of Saccharomyces cerevisiae chromosome VII.</title>
        <authorList>
            <person name="Tettelin H."/>
            <person name="Agostoni-Carbone M.L."/>
            <person name="Albermann K."/>
            <person name="Albers M."/>
            <person name="Arroyo J."/>
            <person name="Backes U."/>
            <person name="Barreiros T."/>
            <person name="Bertani I."/>
            <person name="Bjourson A.J."/>
            <person name="Brueckner M."/>
            <person name="Bruschi C.V."/>
            <person name="Carignani G."/>
            <person name="Castagnoli L."/>
            <person name="Cerdan E."/>
            <person name="Clemente M.L."/>
            <person name="Coblenz A."/>
            <person name="Coglievina M."/>
            <person name="Coissac E."/>
            <person name="Defoor E."/>
            <person name="Del Bino S."/>
            <person name="Delius H."/>
            <person name="Delneri D."/>
            <person name="de Wergifosse P."/>
            <person name="Dujon B."/>
            <person name="Durand P."/>
            <person name="Entian K.-D."/>
            <person name="Eraso P."/>
            <person name="Escribano V."/>
            <person name="Fabiani L."/>
            <person name="Fartmann B."/>
            <person name="Feroli F."/>
            <person name="Feuermann M."/>
            <person name="Frontali L."/>
            <person name="Garcia-Gonzalez M."/>
            <person name="Garcia-Saez M.I."/>
            <person name="Goffeau A."/>
            <person name="Guerreiro P."/>
            <person name="Hani J."/>
            <person name="Hansen M."/>
            <person name="Hebling U."/>
            <person name="Hernandez K."/>
            <person name="Heumann K."/>
            <person name="Hilger F."/>
            <person name="Hofmann B."/>
            <person name="Indge K.J."/>
            <person name="James C.M."/>
            <person name="Klima R."/>
            <person name="Koetter P."/>
            <person name="Kramer B."/>
            <person name="Kramer W."/>
            <person name="Lauquin G."/>
            <person name="Leuther H."/>
            <person name="Louis E.J."/>
            <person name="Maillier E."/>
            <person name="Marconi A."/>
            <person name="Martegani E."/>
            <person name="Mazon M.J."/>
            <person name="Mazzoni C."/>
            <person name="McReynolds A.D.K."/>
            <person name="Melchioretto P."/>
            <person name="Mewes H.-W."/>
            <person name="Minenkova O."/>
            <person name="Mueller-Auer S."/>
            <person name="Nawrocki A."/>
            <person name="Netter P."/>
            <person name="Neu R."/>
            <person name="Nombela C."/>
            <person name="Oliver S.G."/>
            <person name="Panzeri L."/>
            <person name="Paoluzi S."/>
            <person name="Plevani P."/>
            <person name="Portetelle D."/>
            <person name="Portillo F."/>
            <person name="Potier S."/>
            <person name="Purnelle B."/>
            <person name="Rieger M."/>
            <person name="Riles L."/>
            <person name="Rinaldi T."/>
            <person name="Robben J."/>
            <person name="Rodrigues-Pousada C."/>
            <person name="Rodriguez-Belmonte E."/>
            <person name="Rodriguez-Torres A.M."/>
            <person name="Rose M."/>
            <person name="Ruzzi M."/>
            <person name="Saliola M."/>
            <person name="Sanchez-Perez M."/>
            <person name="Schaefer B."/>
            <person name="Schaefer M."/>
            <person name="Scharfe M."/>
            <person name="Schmidheini T."/>
            <person name="Schreer A."/>
            <person name="Skala J."/>
            <person name="Souciet J.-L."/>
            <person name="Steensma H.Y."/>
            <person name="Talla E."/>
            <person name="Thierry A."/>
            <person name="Vandenbol M."/>
            <person name="van der Aart Q.J.M."/>
            <person name="Van Dyck L."/>
            <person name="Vanoni M."/>
            <person name="Verhasselt P."/>
            <person name="Voet M."/>
            <person name="Volckaert G."/>
            <person name="Wambutt R."/>
            <person name="Watson M.D."/>
            <person name="Weber N."/>
            <person name="Wedler E."/>
            <person name="Wedler H."/>
            <person name="Wipfli P."/>
            <person name="Wolf K."/>
            <person name="Wright L.F."/>
            <person name="Zaccaria P."/>
            <person name="Zimmermann M."/>
            <person name="Zollner A."/>
            <person name="Kleine K."/>
        </authorList>
    </citation>
    <scope>NUCLEOTIDE SEQUENCE [LARGE SCALE GENOMIC DNA]</scope>
    <source>
        <strain>ATCC 204508 / S288c</strain>
    </source>
</reference>
<reference key="3">
    <citation type="journal article" date="2014" name="G3 (Bethesda)">
        <title>The reference genome sequence of Saccharomyces cerevisiae: Then and now.</title>
        <authorList>
            <person name="Engel S.R."/>
            <person name="Dietrich F.S."/>
            <person name="Fisk D.G."/>
            <person name="Binkley G."/>
            <person name="Balakrishnan R."/>
            <person name="Costanzo M.C."/>
            <person name="Dwight S.S."/>
            <person name="Hitz B.C."/>
            <person name="Karra K."/>
            <person name="Nash R.S."/>
            <person name="Weng S."/>
            <person name="Wong E.D."/>
            <person name="Lloyd P."/>
            <person name="Skrzypek M.S."/>
            <person name="Miyasato S.R."/>
            <person name="Simison M."/>
            <person name="Cherry J.M."/>
        </authorList>
    </citation>
    <scope>GENOME REANNOTATION</scope>
    <source>
        <strain>ATCC 204508 / S288c</strain>
    </source>
</reference>
<reference key="4">
    <citation type="journal article" date="2003" name="Nature">
        <title>Sequencing and comparison of yeast species to identify genes and regulatory elements.</title>
        <authorList>
            <person name="Kellis M."/>
            <person name="Patterson N."/>
            <person name="Endrizzi M."/>
            <person name="Birren B.W."/>
            <person name="Lander E.S."/>
        </authorList>
    </citation>
    <scope>IDENTIFICATION OF PROBABLE INITIATION SITE</scope>
</reference>
<reference key="5">
    <citation type="journal article" date="1997" name="Mol. Biol. Cell">
        <title>A novel yeast screen for mitotic arrest mutants identifies DOC1, a new gene involved in cyclin proteolysis.</title>
        <authorList>
            <person name="Hwang L.H."/>
            <person name="Murray A.W."/>
        </authorList>
    </citation>
    <scope>SUBUNIT</scope>
    <scope>MUTAGENESIS OF SER-94</scope>
</reference>
<reference key="6">
    <citation type="journal article" date="2002" name="Nat. Cell Biol.">
        <title>The Doc1 subunit is a processivity factor for the anaphase-promoting complex.</title>
        <authorList>
            <person name="Carroll C.W."/>
            <person name="Morgan D.O."/>
        </authorList>
    </citation>
    <scope>FUNCTION</scope>
    <scope>SUBSTRATE RECOGNITION</scope>
</reference>
<reference key="7">
    <citation type="journal article" date="2003" name="EMBO J.">
        <title>Doc1 mediates the activity of the anaphase-promoting complex by contributing to substrate recognition.</title>
        <authorList>
            <person name="Passmore L.A."/>
            <person name="McCormack E.A."/>
            <person name="Au S.W."/>
            <person name="Paul A."/>
            <person name="Willison K.R."/>
            <person name="Harper J.W."/>
            <person name="Barford D."/>
        </authorList>
    </citation>
    <scope>SUBUNIT</scope>
    <scope>ROLE IN APC/C SUBSTRATE RECOGNITION</scope>
</reference>
<reference key="8">
    <citation type="journal article" date="2003" name="Nature">
        <title>Global analysis of protein localization in budding yeast.</title>
        <authorList>
            <person name="Huh W.-K."/>
            <person name="Falvo J.V."/>
            <person name="Gerke L.C."/>
            <person name="Carroll A.S."/>
            <person name="Howson R.W."/>
            <person name="Weissman J.S."/>
            <person name="O'Shea E.K."/>
        </authorList>
    </citation>
    <scope>SUBCELLULAR LOCATION [LARGE SCALE ANALYSIS]</scope>
</reference>
<reference key="9">
    <citation type="journal article" date="2003" name="Nature">
        <title>Global analysis of protein expression in yeast.</title>
        <authorList>
            <person name="Ghaemmaghami S."/>
            <person name="Huh W.-K."/>
            <person name="Bower K."/>
            <person name="Howson R.W."/>
            <person name="Belle A."/>
            <person name="Dephoure N."/>
            <person name="O'Shea E.K."/>
            <person name="Weissman J.S."/>
        </authorList>
    </citation>
    <scope>LEVEL OF PROTEIN EXPRESSION [LARGE SCALE ANALYSIS]</scope>
</reference>
<reference key="10">
    <citation type="journal article" date="2002" name="J. Mol. Biol.">
        <title>Implications for the ubiquitination reaction of the anaphase-promoting complex from the crystal structure of the Doc1/Apc10 subunit.</title>
        <authorList>
            <person name="Au S.W."/>
            <person name="Leng X."/>
            <person name="Harper J.W."/>
            <person name="Barford D."/>
        </authorList>
    </citation>
    <scope>X-RAY CRYSTALLOGRAPHY (2.2 ANGSTROMS) OF 30-250</scope>
</reference>
<feature type="chain" id="PRO_0000174016" description="Anaphase-promoting complex subunit DOC1">
    <location>
        <begin position="1"/>
        <end position="250"/>
    </location>
</feature>
<feature type="domain" description="DOC" evidence="1">
    <location>
        <begin position="60"/>
        <end position="246"/>
    </location>
</feature>
<feature type="mutagenesis site" description="In DOC1-1; G2/M cell cycle arrest at 37 degrees Celsius." evidence="6">
    <original>S</original>
    <variation>F</variation>
    <location>
        <position position="94"/>
    </location>
</feature>
<feature type="helix" evidence="9">
    <location>
        <begin position="5"/>
        <end position="13"/>
    </location>
</feature>
<feature type="turn" evidence="9">
    <location>
        <begin position="17"/>
        <end position="19"/>
    </location>
</feature>
<feature type="strand" evidence="8">
    <location>
        <begin position="31"/>
        <end position="35"/>
    </location>
</feature>
<feature type="strand" evidence="9">
    <location>
        <begin position="36"/>
        <end position="38"/>
    </location>
</feature>
<feature type="helix" evidence="8">
    <location>
        <begin position="41"/>
        <end position="43"/>
    </location>
</feature>
<feature type="turn" evidence="8">
    <location>
        <begin position="44"/>
        <end position="46"/>
    </location>
</feature>
<feature type="helix" evidence="8">
    <location>
        <begin position="62"/>
        <end position="77"/>
    </location>
</feature>
<feature type="strand" evidence="8">
    <location>
        <begin position="79"/>
        <end position="83"/>
    </location>
</feature>
<feature type="helix" evidence="8">
    <location>
        <begin position="85"/>
        <end position="87"/>
    </location>
</feature>
<feature type="strand" evidence="8">
    <location>
        <begin position="88"/>
        <end position="93"/>
    </location>
</feature>
<feature type="helix" evidence="8">
    <location>
        <begin position="101"/>
        <end position="104"/>
    </location>
</feature>
<feature type="strand" evidence="8">
    <location>
        <begin position="105"/>
        <end position="107"/>
    </location>
</feature>
<feature type="strand" evidence="8">
    <location>
        <begin position="117"/>
        <end position="133"/>
    </location>
</feature>
<feature type="strand" evidence="8">
    <location>
        <begin position="135"/>
        <end position="141"/>
    </location>
</feature>
<feature type="helix" evidence="8">
    <location>
        <begin position="142"/>
        <end position="145"/>
    </location>
</feature>
<feature type="helix" evidence="8">
    <location>
        <begin position="146"/>
        <end position="148"/>
    </location>
</feature>
<feature type="strand" evidence="8">
    <location>
        <begin position="149"/>
        <end position="160"/>
    </location>
</feature>
<feature type="turn" evidence="8">
    <location>
        <begin position="161"/>
        <end position="163"/>
    </location>
</feature>
<feature type="strand" evidence="8">
    <location>
        <begin position="165"/>
        <end position="174"/>
    </location>
</feature>
<feature type="strand" evidence="8">
    <location>
        <begin position="176"/>
        <end position="181"/>
    </location>
</feature>
<feature type="turn" evidence="9">
    <location>
        <begin position="188"/>
        <end position="190"/>
    </location>
</feature>
<feature type="strand" evidence="8">
    <location>
        <begin position="193"/>
        <end position="206"/>
    </location>
</feature>
<feature type="strand" evidence="8">
    <location>
        <begin position="213"/>
        <end position="215"/>
    </location>
</feature>
<feature type="strand" evidence="8">
    <location>
        <begin position="217"/>
        <end position="222"/>
    </location>
</feature>
<keyword id="KW-0002">3D-structure</keyword>
<keyword id="KW-0131">Cell cycle</keyword>
<keyword id="KW-0132">Cell division</keyword>
<keyword id="KW-0963">Cytoplasm</keyword>
<keyword id="KW-0498">Mitosis</keyword>
<keyword id="KW-0539">Nucleus</keyword>
<keyword id="KW-1185">Reference proteome</keyword>
<keyword id="KW-0833">Ubl conjugation pathway</keyword>
<comment type="function">
    <text evidence="2 3">Component of the anaphase promoting complex/cyclosome (APC/C), a cell cycle-regulated E3 ubiquitin-protein ligase complex that controls progression through mitosis and the G1 phase of the cell cycle. The APC/C is thought to confer substrate specificity and, in the presence of ubiquitin-conjugating E2 enzymes, it catalyzes the formation of protein-ubiquitin conjugates that are subsequently degraded by the 26S proteasome. In early mitosis, the APC/C is activated by CDC20 and targets securin PDS1, the B-type cyclin CLB5, and other anaphase inhibitory proteins for proteolysis, thereby triggering the separation of sister chromatids at the metaphase-to-anaphase transition. In late mitosis and in G1, degradation of CLB5 allows activation of the APC/C by CDH1, which is needed to destroy CDC20 and the B-type cyclin CLB2 to allow exit from mitosis and creating the low CDK state necessary for cytokinesis and for reforming prereplicative complexes in G1 prior to another round of replication. DOC1 is required, together with the coactivators CDH1 and CDC20, for recognition and binding of the substrates.</text>
</comment>
<comment type="pathway">
    <text>Protein modification; protein ubiquitination.</text>
</comment>
<comment type="subunit">
    <text evidence="3 6">The APC/C is composed of at least 13 subunits that stay tightly associated throughout the cell cycle: APC1, APC2, APC4, APC5, APC9, APC11, CDC16, CDC23, CDC26, CDC27, DOC1, MND2 and SWM1.</text>
</comment>
<comment type="interaction">
    <interactant intactId="EBI-2603">
        <id>P53068</id>
    </interactant>
    <interactant intactId="EBI-29017">
        <id>P53886</id>
        <label>APC1</label>
    </interactant>
    <organismsDiffer>false</organismsDiffer>
    <experiments>10</experiments>
</comment>
<comment type="interaction">
    <interactant intactId="EBI-2603">
        <id>P53068</id>
    </interactant>
    <interactant intactId="EBI-4208">
        <id>P09798</id>
        <label>CDC16</label>
    </interactant>
    <organismsDiffer>false</organismsDiffer>
    <experiments>14</experiments>
</comment>
<comment type="interaction">
    <interactant intactId="EBI-2603">
        <id>P53068</id>
    </interactant>
    <interactant intactId="EBI-4249">
        <id>P38042</id>
        <label>CDC27</label>
    </interactant>
    <organismsDiffer>false</organismsDiffer>
    <experiments>5</experiments>
</comment>
<comment type="subcellular location">
    <subcellularLocation>
        <location evidence="4">Cytoplasm</location>
    </subcellularLocation>
    <subcellularLocation>
        <location evidence="4">Nucleus</location>
    </subcellularLocation>
</comment>
<comment type="miscellaneous">
    <text evidence="5">Present with 1364 molecules/cell in log phase SD medium.</text>
</comment>
<comment type="similarity">
    <text evidence="7">Belongs to the APC10 family.</text>
</comment>
<comment type="sequence caution" evidence="7">
    <conflict type="erroneous initiation">
        <sequence resource="EMBL-CDS" id="CAA89016"/>
    </conflict>
</comment>
<comment type="sequence caution" evidence="7">
    <conflict type="erroneous initiation">
        <sequence resource="EMBL-CDS" id="CAA96959"/>
    </conflict>
</comment>
<name>APC10_YEAST</name>
<proteinExistence type="evidence at protein level"/>
<evidence type="ECO:0000255" key="1">
    <source>
        <dbReference type="PROSITE-ProRule" id="PRU00614"/>
    </source>
</evidence>
<evidence type="ECO:0000269" key="2">
    <source>
    </source>
</evidence>
<evidence type="ECO:0000269" key="3">
    <source>
    </source>
</evidence>
<evidence type="ECO:0000269" key="4">
    <source>
    </source>
</evidence>
<evidence type="ECO:0000269" key="5">
    <source>
    </source>
</evidence>
<evidence type="ECO:0000269" key="6">
    <source>
    </source>
</evidence>
<evidence type="ECO:0000305" key="7"/>
<evidence type="ECO:0007829" key="8">
    <source>
        <dbReference type="PDB" id="1GQP"/>
    </source>
</evidence>
<evidence type="ECO:0007829" key="9">
    <source>
        <dbReference type="PDB" id="8A3T"/>
    </source>
</evidence>
<accession>P53068</accession>
<accession>D6VV95</accession>
<protein>
    <recommendedName>
        <fullName>Anaphase-promoting complex subunit DOC1</fullName>
    </recommendedName>
    <alternativeName>
        <fullName>Destruction of cyclin B protein 1</fullName>
    </alternativeName>
</protein>